<name>RS12_MICAN</name>
<proteinExistence type="inferred from homology"/>
<reference key="1">
    <citation type="journal article" date="2007" name="DNA Res.">
        <title>Complete genomic structure of the bloom-forming toxic cyanobacterium Microcystis aeruginosa NIES-843.</title>
        <authorList>
            <person name="Kaneko T."/>
            <person name="Nakajima N."/>
            <person name="Okamoto S."/>
            <person name="Suzuki I."/>
            <person name="Tanabe Y."/>
            <person name="Tamaoki M."/>
            <person name="Nakamura Y."/>
            <person name="Kasai F."/>
            <person name="Watanabe A."/>
            <person name="Kawashima K."/>
            <person name="Kishida Y."/>
            <person name="Ono A."/>
            <person name="Shimizu Y."/>
            <person name="Takahashi C."/>
            <person name="Minami C."/>
            <person name="Fujishiro T."/>
            <person name="Kohara M."/>
            <person name="Katoh M."/>
            <person name="Nakazaki N."/>
            <person name="Nakayama S."/>
            <person name="Yamada M."/>
            <person name="Tabata S."/>
            <person name="Watanabe M.M."/>
        </authorList>
    </citation>
    <scope>NUCLEOTIDE SEQUENCE [LARGE SCALE GENOMIC DNA]</scope>
    <source>
        <strain>NIES-843 / IAM M-247</strain>
    </source>
</reference>
<feature type="chain" id="PRO_1000080403" description="Small ribosomal subunit protein uS12">
    <location>
        <begin position="1"/>
        <end position="127"/>
    </location>
</feature>
<feature type="region of interest" description="Disordered" evidence="3">
    <location>
        <begin position="1"/>
        <end position="28"/>
    </location>
</feature>
<feature type="region of interest" description="Disordered" evidence="3">
    <location>
        <begin position="104"/>
        <end position="127"/>
    </location>
</feature>
<feature type="compositionally biased region" description="Basic residues" evidence="3">
    <location>
        <begin position="109"/>
        <end position="127"/>
    </location>
</feature>
<feature type="modified residue" description="3-methylthioaspartic acid" evidence="1">
    <location>
        <position position="89"/>
    </location>
</feature>
<gene>
    <name evidence="2" type="primary">rpsL</name>
    <name evidence="2" type="synonym">rps12</name>
    <name type="ordered locus">MAE_42790</name>
</gene>
<comment type="function">
    <text evidence="2">With S4 and S5 plays an important role in translational accuracy.</text>
</comment>
<comment type="function">
    <text evidence="2">Interacts with and stabilizes bases of the 16S rRNA that are involved in tRNA selection in the A site and with the mRNA backbone. Located at the interface of the 30S and 50S subunits, it traverses the body of the 30S subunit contacting proteins on the other side and probably holding the rRNA structure together. The combined cluster of proteins S8, S12 and S17 appears to hold together the shoulder and platform of the 30S subunit.</text>
</comment>
<comment type="subunit">
    <text evidence="2">Part of the 30S ribosomal subunit. Contacts proteins S8 and S17. May interact with IF1 in the 30S initiation complex.</text>
</comment>
<comment type="similarity">
    <text evidence="2">Belongs to the universal ribosomal protein uS12 family.</text>
</comment>
<accession>B0JSE3</accession>
<organism>
    <name type="scientific">Microcystis aeruginosa (strain NIES-843 / IAM M-2473)</name>
    <dbReference type="NCBI Taxonomy" id="449447"/>
    <lineage>
        <taxon>Bacteria</taxon>
        <taxon>Bacillati</taxon>
        <taxon>Cyanobacteriota</taxon>
        <taxon>Cyanophyceae</taxon>
        <taxon>Oscillatoriophycideae</taxon>
        <taxon>Chroococcales</taxon>
        <taxon>Microcystaceae</taxon>
        <taxon>Microcystis</taxon>
    </lineage>
</organism>
<protein>
    <recommendedName>
        <fullName evidence="2">Small ribosomal subunit protein uS12</fullName>
    </recommendedName>
    <alternativeName>
        <fullName evidence="4">30S ribosomal protein S12</fullName>
    </alternativeName>
</protein>
<sequence>MPTIQQLIRDERSKAKRKTKSPALKQCPQRRGVCTRVYTTTPKKPNSALRKVARVRLTSGFEVTAYIPGIGHNLQEHSVVLIRGGRVKDLPGVRYHIIRGTLDATGVKNRQKARSKYGTKRPKPAAK</sequence>
<keyword id="KW-0488">Methylation</keyword>
<keyword id="KW-0687">Ribonucleoprotein</keyword>
<keyword id="KW-0689">Ribosomal protein</keyword>
<keyword id="KW-0694">RNA-binding</keyword>
<keyword id="KW-0699">rRNA-binding</keyword>
<keyword id="KW-0820">tRNA-binding</keyword>
<evidence type="ECO:0000250" key="1"/>
<evidence type="ECO:0000255" key="2">
    <source>
        <dbReference type="HAMAP-Rule" id="MF_00403"/>
    </source>
</evidence>
<evidence type="ECO:0000256" key="3">
    <source>
        <dbReference type="SAM" id="MobiDB-lite"/>
    </source>
</evidence>
<evidence type="ECO:0000305" key="4"/>
<dbReference type="EMBL" id="AP009552">
    <property type="protein sequence ID" value="BAG04101.1"/>
    <property type="molecule type" value="Genomic_DNA"/>
</dbReference>
<dbReference type="RefSeq" id="WP_002740176.1">
    <property type="nucleotide sequence ID" value="NC_010296.1"/>
</dbReference>
<dbReference type="SMR" id="B0JSE3"/>
<dbReference type="STRING" id="449447.MAE_42790"/>
<dbReference type="PaxDb" id="449447-MAE_42790"/>
<dbReference type="EnsemblBacteria" id="BAG04101">
    <property type="protein sequence ID" value="BAG04101"/>
    <property type="gene ID" value="MAE_42790"/>
</dbReference>
<dbReference type="GeneID" id="66707205"/>
<dbReference type="KEGG" id="mar:MAE_42790"/>
<dbReference type="eggNOG" id="COG0048">
    <property type="taxonomic scope" value="Bacteria"/>
</dbReference>
<dbReference type="HOGENOM" id="CLU_104295_1_2_3"/>
<dbReference type="BioCyc" id="MAER449447:MAE_RS18570-MONOMER"/>
<dbReference type="Proteomes" id="UP000001510">
    <property type="component" value="Chromosome"/>
</dbReference>
<dbReference type="GO" id="GO:0015935">
    <property type="term" value="C:small ribosomal subunit"/>
    <property type="evidence" value="ECO:0007669"/>
    <property type="project" value="InterPro"/>
</dbReference>
<dbReference type="GO" id="GO:0019843">
    <property type="term" value="F:rRNA binding"/>
    <property type="evidence" value="ECO:0007669"/>
    <property type="project" value="UniProtKB-UniRule"/>
</dbReference>
<dbReference type="GO" id="GO:0003735">
    <property type="term" value="F:structural constituent of ribosome"/>
    <property type="evidence" value="ECO:0007669"/>
    <property type="project" value="InterPro"/>
</dbReference>
<dbReference type="GO" id="GO:0000049">
    <property type="term" value="F:tRNA binding"/>
    <property type="evidence" value="ECO:0007669"/>
    <property type="project" value="UniProtKB-UniRule"/>
</dbReference>
<dbReference type="GO" id="GO:0006412">
    <property type="term" value="P:translation"/>
    <property type="evidence" value="ECO:0007669"/>
    <property type="project" value="UniProtKB-UniRule"/>
</dbReference>
<dbReference type="CDD" id="cd03368">
    <property type="entry name" value="Ribosomal_S12"/>
    <property type="match status" value="1"/>
</dbReference>
<dbReference type="FunFam" id="2.40.50.140:FF:000001">
    <property type="entry name" value="30S ribosomal protein S12"/>
    <property type="match status" value="1"/>
</dbReference>
<dbReference type="Gene3D" id="2.40.50.140">
    <property type="entry name" value="Nucleic acid-binding proteins"/>
    <property type="match status" value="1"/>
</dbReference>
<dbReference type="HAMAP" id="MF_00403_B">
    <property type="entry name" value="Ribosomal_uS12_B"/>
    <property type="match status" value="1"/>
</dbReference>
<dbReference type="InterPro" id="IPR012340">
    <property type="entry name" value="NA-bd_OB-fold"/>
</dbReference>
<dbReference type="InterPro" id="IPR006032">
    <property type="entry name" value="Ribosomal_uS12"/>
</dbReference>
<dbReference type="InterPro" id="IPR005679">
    <property type="entry name" value="Ribosomal_uS12_bac"/>
</dbReference>
<dbReference type="NCBIfam" id="TIGR00981">
    <property type="entry name" value="rpsL_bact"/>
    <property type="match status" value="1"/>
</dbReference>
<dbReference type="PANTHER" id="PTHR11652">
    <property type="entry name" value="30S RIBOSOMAL PROTEIN S12 FAMILY MEMBER"/>
    <property type="match status" value="1"/>
</dbReference>
<dbReference type="Pfam" id="PF00164">
    <property type="entry name" value="Ribosom_S12_S23"/>
    <property type="match status" value="1"/>
</dbReference>
<dbReference type="PIRSF" id="PIRSF002133">
    <property type="entry name" value="Ribosomal_S12/S23"/>
    <property type="match status" value="1"/>
</dbReference>
<dbReference type="PRINTS" id="PR01034">
    <property type="entry name" value="RIBOSOMALS12"/>
</dbReference>
<dbReference type="SUPFAM" id="SSF50249">
    <property type="entry name" value="Nucleic acid-binding proteins"/>
    <property type="match status" value="1"/>
</dbReference>
<dbReference type="PROSITE" id="PS00055">
    <property type="entry name" value="RIBOSOMAL_S12"/>
    <property type="match status" value="1"/>
</dbReference>